<gene>
    <name evidence="7" type="primary">ACTRT1</name>
    <name evidence="4" type="synonym">ARPT1</name>
    <name type="ORF">HSD27</name>
</gene>
<proteinExistence type="evidence at protein level"/>
<reference key="1">
    <citation type="journal article" date="2002" name="Exp. Cell Res.">
        <title>Novel actin-related proteins Arp-T1 and Arp-T2 as components of the cytoskeletal calyx of the mammalian sperm head.</title>
        <authorList>
            <person name="Heid H.W."/>
            <person name="Figge U."/>
            <person name="Winter S."/>
            <person name="Kuhn C."/>
            <person name="Zimbelmann R."/>
            <person name="Franke W.W."/>
        </authorList>
    </citation>
    <scope>NUCLEOTIDE SEQUENCE [MRNA]</scope>
    <scope>SUBCELLULAR LOCATION</scope>
</reference>
<reference key="2">
    <citation type="submission" date="2003-03" db="EMBL/GenBank/DDBJ databases">
        <title>A new spermatogenesis-related gene.</title>
        <authorList>
            <person name="Wu N."/>
            <person name="Miao S.Y."/>
            <person name="Zhang X.D."/>
            <person name="Qiao Y."/>
            <person name="Liang G."/>
            <person name="Wang L.F."/>
        </authorList>
    </citation>
    <scope>NUCLEOTIDE SEQUENCE [LARGE SCALE MRNA]</scope>
    <source>
        <tissue>Testis</tissue>
    </source>
</reference>
<reference key="3">
    <citation type="journal article" date="2005" name="Nature">
        <title>The DNA sequence of the human X chromosome.</title>
        <authorList>
            <person name="Ross M.T."/>
            <person name="Grafham D.V."/>
            <person name="Coffey A.J."/>
            <person name="Scherer S."/>
            <person name="McLay K."/>
            <person name="Muzny D."/>
            <person name="Platzer M."/>
            <person name="Howell G.R."/>
            <person name="Burrows C."/>
            <person name="Bird C.P."/>
            <person name="Frankish A."/>
            <person name="Lovell F.L."/>
            <person name="Howe K.L."/>
            <person name="Ashurst J.L."/>
            <person name="Fulton R.S."/>
            <person name="Sudbrak R."/>
            <person name="Wen G."/>
            <person name="Jones M.C."/>
            <person name="Hurles M.E."/>
            <person name="Andrews T.D."/>
            <person name="Scott C.E."/>
            <person name="Searle S."/>
            <person name="Ramser J."/>
            <person name="Whittaker A."/>
            <person name="Deadman R."/>
            <person name="Carter N.P."/>
            <person name="Hunt S.E."/>
            <person name="Chen R."/>
            <person name="Cree A."/>
            <person name="Gunaratne P."/>
            <person name="Havlak P."/>
            <person name="Hodgson A."/>
            <person name="Metzker M.L."/>
            <person name="Richards S."/>
            <person name="Scott G."/>
            <person name="Steffen D."/>
            <person name="Sodergren E."/>
            <person name="Wheeler D.A."/>
            <person name="Worley K.C."/>
            <person name="Ainscough R."/>
            <person name="Ambrose K.D."/>
            <person name="Ansari-Lari M.A."/>
            <person name="Aradhya S."/>
            <person name="Ashwell R.I."/>
            <person name="Babbage A.K."/>
            <person name="Bagguley C.L."/>
            <person name="Ballabio A."/>
            <person name="Banerjee R."/>
            <person name="Barker G.E."/>
            <person name="Barlow K.F."/>
            <person name="Barrett I.P."/>
            <person name="Bates K.N."/>
            <person name="Beare D.M."/>
            <person name="Beasley H."/>
            <person name="Beasley O."/>
            <person name="Beck A."/>
            <person name="Bethel G."/>
            <person name="Blechschmidt K."/>
            <person name="Brady N."/>
            <person name="Bray-Allen S."/>
            <person name="Bridgeman A.M."/>
            <person name="Brown A.J."/>
            <person name="Brown M.J."/>
            <person name="Bonnin D."/>
            <person name="Bruford E.A."/>
            <person name="Buhay C."/>
            <person name="Burch P."/>
            <person name="Burford D."/>
            <person name="Burgess J."/>
            <person name="Burrill W."/>
            <person name="Burton J."/>
            <person name="Bye J.M."/>
            <person name="Carder C."/>
            <person name="Carrel L."/>
            <person name="Chako J."/>
            <person name="Chapman J.C."/>
            <person name="Chavez D."/>
            <person name="Chen E."/>
            <person name="Chen G."/>
            <person name="Chen Y."/>
            <person name="Chen Z."/>
            <person name="Chinault C."/>
            <person name="Ciccodicola A."/>
            <person name="Clark S.Y."/>
            <person name="Clarke G."/>
            <person name="Clee C.M."/>
            <person name="Clegg S."/>
            <person name="Clerc-Blankenburg K."/>
            <person name="Clifford K."/>
            <person name="Cobley V."/>
            <person name="Cole C.G."/>
            <person name="Conquer J.S."/>
            <person name="Corby N."/>
            <person name="Connor R.E."/>
            <person name="David R."/>
            <person name="Davies J."/>
            <person name="Davis C."/>
            <person name="Davis J."/>
            <person name="Delgado O."/>
            <person name="Deshazo D."/>
            <person name="Dhami P."/>
            <person name="Ding Y."/>
            <person name="Dinh H."/>
            <person name="Dodsworth S."/>
            <person name="Draper H."/>
            <person name="Dugan-Rocha S."/>
            <person name="Dunham A."/>
            <person name="Dunn M."/>
            <person name="Durbin K.J."/>
            <person name="Dutta I."/>
            <person name="Eades T."/>
            <person name="Ellwood M."/>
            <person name="Emery-Cohen A."/>
            <person name="Errington H."/>
            <person name="Evans K.L."/>
            <person name="Faulkner L."/>
            <person name="Francis F."/>
            <person name="Frankland J."/>
            <person name="Fraser A.E."/>
            <person name="Galgoczy P."/>
            <person name="Gilbert J."/>
            <person name="Gill R."/>
            <person name="Gloeckner G."/>
            <person name="Gregory S.G."/>
            <person name="Gribble S."/>
            <person name="Griffiths C."/>
            <person name="Grocock R."/>
            <person name="Gu Y."/>
            <person name="Gwilliam R."/>
            <person name="Hamilton C."/>
            <person name="Hart E.A."/>
            <person name="Hawes A."/>
            <person name="Heath P.D."/>
            <person name="Heitmann K."/>
            <person name="Hennig S."/>
            <person name="Hernandez J."/>
            <person name="Hinzmann B."/>
            <person name="Ho S."/>
            <person name="Hoffs M."/>
            <person name="Howden P.J."/>
            <person name="Huckle E.J."/>
            <person name="Hume J."/>
            <person name="Hunt P.J."/>
            <person name="Hunt A.R."/>
            <person name="Isherwood J."/>
            <person name="Jacob L."/>
            <person name="Johnson D."/>
            <person name="Jones S."/>
            <person name="de Jong P.J."/>
            <person name="Joseph S.S."/>
            <person name="Keenan S."/>
            <person name="Kelly S."/>
            <person name="Kershaw J.K."/>
            <person name="Khan Z."/>
            <person name="Kioschis P."/>
            <person name="Klages S."/>
            <person name="Knights A.J."/>
            <person name="Kosiura A."/>
            <person name="Kovar-Smith C."/>
            <person name="Laird G.K."/>
            <person name="Langford C."/>
            <person name="Lawlor S."/>
            <person name="Leversha M."/>
            <person name="Lewis L."/>
            <person name="Liu W."/>
            <person name="Lloyd C."/>
            <person name="Lloyd D.M."/>
            <person name="Loulseged H."/>
            <person name="Loveland J.E."/>
            <person name="Lovell J.D."/>
            <person name="Lozado R."/>
            <person name="Lu J."/>
            <person name="Lyne R."/>
            <person name="Ma J."/>
            <person name="Maheshwari M."/>
            <person name="Matthews L.H."/>
            <person name="McDowall J."/>
            <person name="McLaren S."/>
            <person name="McMurray A."/>
            <person name="Meidl P."/>
            <person name="Meitinger T."/>
            <person name="Milne S."/>
            <person name="Miner G."/>
            <person name="Mistry S.L."/>
            <person name="Morgan M."/>
            <person name="Morris S."/>
            <person name="Mueller I."/>
            <person name="Mullikin J.C."/>
            <person name="Nguyen N."/>
            <person name="Nordsiek G."/>
            <person name="Nyakatura G."/>
            <person name="O'dell C.N."/>
            <person name="Okwuonu G."/>
            <person name="Palmer S."/>
            <person name="Pandian R."/>
            <person name="Parker D."/>
            <person name="Parrish J."/>
            <person name="Pasternak S."/>
            <person name="Patel D."/>
            <person name="Pearce A.V."/>
            <person name="Pearson D.M."/>
            <person name="Pelan S.E."/>
            <person name="Perez L."/>
            <person name="Porter K.M."/>
            <person name="Ramsey Y."/>
            <person name="Reichwald K."/>
            <person name="Rhodes S."/>
            <person name="Ridler K.A."/>
            <person name="Schlessinger D."/>
            <person name="Schueler M.G."/>
            <person name="Sehra H.K."/>
            <person name="Shaw-Smith C."/>
            <person name="Shen H."/>
            <person name="Sheridan E.M."/>
            <person name="Shownkeen R."/>
            <person name="Skuce C.D."/>
            <person name="Smith M.L."/>
            <person name="Sotheran E.C."/>
            <person name="Steingruber H.E."/>
            <person name="Steward C.A."/>
            <person name="Storey R."/>
            <person name="Swann R.M."/>
            <person name="Swarbreck D."/>
            <person name="Tabor P.E."/>
            <person name="Taudien S."/>
            <person name="Taylor T."/>
            <person name="Teague B."/>
            <person name="Thomas K."/>
            <person name="Thorpe A."/>
            <person name="Timms K."/>
            <person name="Tracey A."/>
            <person name="Trevanion S."/>
            <person name="Tromans A.C."/>
            <person name="d'Urso M."/>
            <person name="Verduzco D."/>
            <person name="Villasana D."/>
            <person name="Waldron L."/>
            <person name="Wall M."/>
            <person name="Wang Q."/>
            <person name="Warren J."/>
            <person name="Warry G.L."/>
            <person name="Wei X."/>
            <person name="West A."/>
            <person name="Whitehead S.L."/>
            <person name="Whiteley M.N."/>
            <person name="Wilkinson J.E."/>
            <person name="Willey D.L."/>
            <person name="Williams G."/>
            <person name="Williams L."/>
            <person name="Williamson A."/>
            <person name="Williamson H."/>
            <person name="Wilming L."/>
            <person name="Woodmansey R.L."/>
            <person name="Wray P.W."/>
            <person name="Yen J."/>
            <person name="Zhang J."/>
            <person name="Zhou J."/>
            <person name="Zoghbi H."/>
            <person name="Zorilla S."/>
            <person name="Buck D."/>
            <person name="Reinhardt R."/>
            <person name="Poustka A."/>
            <person name="Rosenthal A."/>
            <person name="Lehrach H."/>
            <person name="Meindl A."/>
            <person name="Minx P.J."/>
            <person name="Hillier L.W."/>
            <person name="Willard H.F."/>
            <person name="Wilson R.K."/>
            <person name="Waterston R.H."/>
            <person name="Rice C.M."/>
            <person name="Vaudin M."/>
            <person name="Coulson A."/>
            <person name="Nelson D.L."/>
            <person name="Weinstock G."/>
            <person name="Sulston J.E."/>
            <person name="Durbin R.M."/>
            <person name="Hubbard T."/>
            <person name="Gibbs R.A."/>
            <person name="Beck S."/>
            <person name="Rogers J."/>
            <person name="Bentley D.R."/>
        </authorList>
    </citation>
    <scope>NUCLEOTIDE SEQUENCE [LARGE SCALE GENOMIC DNA]</scope>
</reference>
<reference key="4">
    <citation type="journal article" date="2004" name="Genome Res.">
        <title>The status, quality, and expansion of the NIH full-length cDNA project: the Mammalian Gene Collection (MGC).</title>
        <authorList>
            <consortium name="The MGC Project Team"/>
        </authorList>
    </citation>
    <scope>NUCLEOTIDE SEQUENCE [LARGE SCALE MRNA]</scope>
    <source>
        <tissue>Testis</tissue>
    </source>
</reference>
<reference key="5">
    <citation type="journal article" date="2017" name="Nat. Med.">
        <title>Mutations in ACTRT1 and its enhancer RNA elements lead to aberrant activation of Hedgehog signaling in inherited and sporadic basal cell carcinomas.</title>
        <authorList>
            <person name="Bal E."/>
            <person name="Park H.S."/>
            <person name="Belaid-Choucair Z."/>
            <person name="Kayserili H."/>
            <person name="Naville M."/>
            <person name="Madrange M."/>
            <person name="Chiticariu E."/>
            <person name="Hadj-Rabia S."/>
            <person name="Cagnard N."/>
            <person name="Kuonen F."/>
            <person name="Bachmann D."/>
            <person name="Huber M."/>
            <person name="Le Gall C."/>
            <person name="Cote F."/>
            <person name="Hanein S."/>
            <person name="Rosti R.O."/>
            <person name="Aslanger A.D."/>
            <person name="Waisfisz Q."/>
            <person name="Bodemer C."/>
            <person name="Hermine O."/>
            <person name="Morice-Picard F."/>
            <person name="Labeille B."/>
            <person name="Caux F."/>
            <person name="Mazereeuw-Hautier J."/>
            <person name="Philip N."/>
            <person name="Levy N."/>
            <person name="Taieb A."/>
            <person name="Avril M.F."/>
            <person name="Headon D.J."/>
            <person name="Gyapay G."/>
            <person name="Magnaldo T."/>
            <person name="Fraitag S."/>
            <person name="Crollius H.R."/>
            <person name="Vabres P."/>
            <person name="Hohl D."/>
            <person name="Munnich A."/>
            <person name="Smahi A."/>
        </authorList>
    </citation>
    <scope>FUNCTION</scope>
    <scope>TISSUE SPECIFICITY</scope>
    <scope>SUBCELLULAR LOCATION</scope>
    <scope>VARIANTS LYS-124 AND 217-GLU--PHE-376 DEL</scope>
    <scope>INVOLVEMENT IN DISEASE</scope>
</reference>
<reference key="6">
    <citation type="journal article" date="2019" name="J. Proteome Res.">
        <title>Cell Type-Specific Expression of Testis Elevated Genes Based on Transcriptomics and Antibody-Based Proteomics.</title>
        <authorList>
            <person name="Pineau C."/>
            <person name="Hikmet F."/>
            <person name="Zhang C."/>
            <person name="Oksvold P."/>
            <person name="Chen S."/>
            <person name="Fagerberg L."/>
            <person name="Uhlen M."/>
            <person name="Lindskog C."/>
        </authorList>
    </citation>
    <scope>SUBCELLULAR LOCATION</scope>
</reference>
<keyword id="KW-0963">Cytoplasm</keyword>
<keyword id="KW-0968">Cytoplasmic vesicle</keyword>
<keyword id="KW-0206">Cytoskeleton</keyword>
<keyword id="KW-0539">Nucleus</keyword>
<keyword id="KW-1267">Proteomics identification</keyword>
<keyword id="KW-1185">Reference proteome</keyword>
<keyword id="KW-0804">Transcription</keyword>
<keyword id="KW-0805">Transcription regulation</keyword>
<sequence length="376" mass="41696">MFNPHALDVPAVIFDNGSGLCKAGLSGEIGPRHVISSVLGHCKFNVPLARLNQKYFVGQEALYKYEALHLHYPIERGLVTGWDDMEKLWKHLFERELGVKPSQQPVLMTEPSLNPREIREKLAEMMFETFSVPGFYLSNHAVAALYASACVTGLVVDSGDGVTCTVPIFEGYSLPHAVTKLCMAGRDITEHLTRLLFASGFNFPCILNKAVVNNIKEKLCYIALEPEKELRKSRGEVLGAYRLPDGHVIHFGDELYQVPEVLFAPDQLGIHSPGLSKMVSSSIMKCDTDIQNKLYADIVLSGGTTLLPGLEERLMKEVEQLASKGTPIKITASPDRCFSAWIGASIMTSMSSFKQMWVTSADFKEYGTSVVQRRCF</sequence>
<feature type="chain" id="PRO_0000255656" description="Actin-related protein T1">
    <location>
        <begin position="1"/>
        <end position="376"/>
    </location>
</feature>
<feature type="sequence variant" id="VAR_080907" description="Found in a patient with Bazex syndrome; uncertain significance; dbSNP:rs1927774523." evidence="1">
    <original>E</original>
    <variation>K</variation>
    <location>
        <position position="124"/>
    </location>
</feature>
<feature type="sequence variant" id="VAR_080908" description="Found in a patient with Bazex syndrome; uncertain significance." evidence="1">
    <location>
        <begin position="217"/>
        <end position="376"/>
    </location>
</feature>
<feature type="sequence conflict" description="In Ref. 2; AAP20055." evidence="5" ref="2">
    <original>I</original>
    <variation>M</variation>
    <location>
        <position position="13"/>
    </location>
</feature>
<feature type="sequence conflict" description="In Ref. 2; AAP20055." evidence="5" ref="2">
    <original>L</original>
    <variation>P</variation>
    <location>
        <position position="262"/>
    </location>
</feature>
<feature type="sequence conflict" description="In Ref. 1; AAM00432." evidence="5" ref="1">
    <original>H</original>
    <variation>R</variation>
    <location>
        <position position="271"/>
    </location>
</feature>
<accession>Q8TDG2</accession>
<accession>Q6X7C1</accession>
<accession>Q96L10</accession>
<protein>
    <recommendedName>
        <fullName evidence="5">Actin-related protein T1</fullName>
        <shortName evidence="3 4">ARP-T1</shortName>
    </recommendedName>
</protein>
<comment type="function">
    <text evidence="1">Negatively regulates the Hedgehog (SHH) signaling. Binds to the promoter of the SHH signaling mediator, GLI1, and inhibits its expression.</text>
</comment>
<comment type="subcellular location">
    <subcellularLocation>
        <location evidence="6">Cytoplasm</location>
        <location evidence="6">Cytoskeleton</location>
    </subcellularLocation>
    <subcellularLocation>
        <location evidence="1">Cytoplasm</location>
    </subcellularLocation>
    <subcellularLocation>
        <location evidence="1">Nucleus</location>
    </subcellularLocation>
    <subcellularLocation>
        <location evidence="2">Cytoplasmic vesicle</location>
        <location evidence="2">Secretory vesicle</location>
        <location evidence="2">Acrosome</location>
    </subcellularLocation>
    <text evidence="1">Both detected in the nucleus and cytoplasm, localizes to the nucleus where it binds chromatin upon stimulation of the Hedgehog pathway.</text>
</comment>
<comment type="tissue specificity">
    <text evidence="1">In skin, expressed in the basal, spinous and granular layers of the epidermis. Also expressed in hair follicles, sebaceaous glands, eccrine sweat glands and semen.</text>
</comment>
<comment type="disease">
    <text evidence="1">Mutations and insertions in the coding sequence or in regulatory non-coding elements of this gene may be associated with Bazex syndrome; a cancer-prone genodermatosis with an X-linked dominant inheritance pattern.</text>
</comment>
<comment type="similarity">
    <text evidence="5">Belongs to the actin family.</text>
</comment>
<dbReference type="EMBL" id="AF440739">
    <property type="protein sequence ID" value="AAM00432.1"/>
    <property type="molecule type" value="mRNA"/>
</dbReference>
<dbReference type="EMBL" id="AY251532">
    <property type="protein sequence ID" value="AAP20055.1"/>
    <property type="molecule type" value="mRNA"/>
</dbReference>
<dbReference type="EMBL" id="Z74696">
    <property type="status" value="NOT_ANNOTATED_CDS"/>
    <property type="molecule type" value="Genomic_DNA"/>
</dbReference>
<dbReference type="EMBL" id="BC014597">
    <property type="protein sequence ID" value="AAH14597.1"/>
    <property type="molecule type" value="mRNA"/>
</dbReference>
<dbReference type="CCDS" id="CCDS14611.1"/>
<dbReference type="RefSeq" id="NP_612146.1">
    <property type="nucleotide sequence ID" value="NM_138289.4"/>
</dbReference>
<dbReference type="SMR" id="Q8TDG2"/>
<dbReference type="BioGRID" id="126584">
    <property type="interactions" value="18"/>
</dbReference>
<dbReference type="FunCoup" id="Q8TDG2">
    <property type="interactions" value="94"/>
</dbReference>
<dbReference type="IntAct" id="Q8TDG2">
    <property type="interactions" value="16"/>
</dbReference>
<dbReference type="STRING" id="9606.ENSP00000360165"/>
<dbReference type="GlyGen" id="Q8TDG2">
    <property type="glycosylation" value="3 sites, 1 O-linked glycan (3 sites)"/>
</dbReference>
<dbReference type="iPTMnet" id="Q8TDG2"/>
<dbReference type="PhosphoSitePlus" id="Q8TDG2"/>
<dbReference type="BioMuta" id="ACTRT1"/>
<dbReference type="DMDM" id="118586151"/>
<dbReference type="jPOST" id="Q8TDG2"/>
<dbReference type="MassIVE" id="Q8TDG2"/>
<dbReference type="PaxDb" id="9606-ENSP00000360165"/>
<dbReference type="PeptideAtlas" id="Q8TDG2"/>
<dbReference type="ProteomicsDB" id="74282"/>
<dbReference type="Antibodypedia" id="511">
    <property type="antibodies" value="114 antibodies from 23 providers"/>
</dbReference>
<dbReference type="DNASU" id="139741"/>
<dbReference type="Ensembl" id="ENST00000371124.5">
    <property type="protein sequence ID" value="ENSP00000360165.3"/>
    <property type="gene ID" value="ENSG00000123165.9"/>
</dbReference>
<dbReference type="GeneID" id="139741"/>
<dbReference type="KEGG" id="hsa:139741"/>
<dbReference type="MANE-Select" id="ENST00000371124.5">
    <property type="protein sequence ID" value="ENSP00000360165.3"/>
    <property type="RefSeq nucleotide sequence ID" value="NM_138289.4"/>
    <property type="RefSeq protein sequence ID" value="NP_612146.1"/>
</dbReference>
<dbReference type="UCSC" id="uc004eum.4">
    <property type="organism name" value="human"/>
</dbReference>
<dbReference type="AGR" id="HGNC:24027"/>
<dbReference type="CTD" id="139741"/>
<dbReference type="DisGeNET" id="139741"/>
<dbReference type="GeneCards" id="ACTRT1"/>
<dbReference type="HGNC" id="HGNC:24027">
    <property type="gene designation" value="ACTRT1"/>
</dbReference>
<dbReference type="HPA" id="ENSG00000123165">
    <property type="expression patterns" value="Tissue enriched (testis)"/>
</dbReference>
<dbReference type="MIM" id="300487">
    <property type="type" value="gene"/>
</dbReference>
<dbReference type="neXtProt" id="NX_Q8TDG2"/>
<dbReference type="OpenTargets" id="ENSG00000123165"/>
<dbReference type="PharmGKB" id="PA142672646"/>
<dbReference type="VEuPathDB" id="HostDB:ENSG00000123165"/>
<dbReference type="eggNOG" id="KOG0676">
    <property type="taxonomic scope" value="Eukaryota"/>
</dbReference>
<dbReference type="GeneTree" id="ENSGT00940000162451"/>
<dbReference type="HOGENOM" id="CLU_027965_0_2_1"/>
<dbReference type="InParanoid" id="Q8TDG2"/>
<dbReference type="OMA" id="RWFSAWI"/>
<dbReference type="OrthoDB" id="10053773at2759"/>
<dbReference type="PAN-GO" id="Q8TDG2">
    <property type="GO annotations" value="3 GO annotations based on evolutionary models"/>
</dbReference>
<dbReference type="PhylomeDB" id="Q8TDG2"/>
<dbReference type="TreeFam" id="TF354237"/>
<dbReference type="PathwayCommons" id="Q8TDG2"/>
<dbReference type="SignaLink" id="Q8TDG2"/>
<dbReference type="BioGRID-ORCS" id="139741">
    <property type="hits" value="9 hits in 763 CRISPR screens"/>
</dbReference>
<dbReference type="GenomeRNAi" id="139741"/>
<dbReference type="Pharos" id="Q8TDG2">
    <property type="development level" value="Tdark"/>
</dbReference>
<dbReference type="PRO" id="PR:Q8TDG2"/>
<dbReference type="Proteomes" id="UP000005640">
    <property type="component" value="Chromosome X"/>
</dbReference>
<dbReference type="RNAct" id="Q8TDG2">
    <property type="molecule type" value="protein"/>
</dbReference>
<dbReference type="Bgee" id="ENSG00000123165">
    <property type="expression patterns" value="Expressed in male germ line stem cell (sensu Vertebrata) in testis and 2 other cell types or tissues"/>
</dbReference>
<dbReference type="GO" id="GO:0001669">
    <property type="term" value="C:acrosomal vesicle"/>
    <property type="evidence" value="ECO:0000314"/>
    <property type="project" value="UniProtKB"/>
</dbReference>
<dbReference type="GO" id="GO:0015629">
    <property type="term" value="C:actin cytoskeleton"/>
    <property type="evidence" value="ECO:0000318"/>
    <property type="project" value="GO_Central"/>
</dbReference>
<dbReference type="GO" id="GO:0005737">
    <property type="term" value="C:cytoplasm"/>
    <property type="evidence" value="ECO:0000314"/>
    <property type="project" value="UniProtKB"/>
</dbReference>
<dbReference type="GO" id="GO:0005634">
    <property type="term" value="C:nucleus"/>
    <property type="evidence" value="ECO:0000314"/>
    <property type="project" value="UniProtKB"/>
</dbReference>
<dbReference type="GO" id="GO:0003682">
    <property type="term" value="F:chromatin binding"/>
    <property type="evidence" value="ECO:0000314"/>
    <property type="project" value="UniProtKB"/>
</dbReference>
<dbReference type="GO" id="GO:0045892">
    <property type="term" value="P:negative regulation of DNA-templated transcription"/>
    <property type="evidence" value="ECO:0000314"/>
    <property type="project" value="UniProtKB"/>
</dbReference>
<dbReference type="GO" id="GO:0006355">
    <property type="term" value="P:regulation of DNA-templated transcription"/>
    <property type="evidence" value="ECO:0000318"/>
    <property type="project" value="GO_Central"/>
</dbReference>
<dbReference type="GO" id="GO:0008589">
    <property type="term" value="P:regulation of smoothened signaling pathway"/>
    <property type="evidence" value="ECO:0000314"/>
    <property type="project" value="UniProtKB"/>
</dbReference>
<dbReference type="CDD" id="cd13397">
    <property type="entry name" value="ASKHA_NBD_actin_Arp-T1-3"/>
    <property type="match status" value="1"/>
</dbReference>
<dbReference type="FunFam" id="3.90.640.10:FF:000007">
    <property type="entry name" value="Actin like 7B"/>
    <property type="match status" value="1"/>
</dbReference>
<dbReference type="FunFam" id="3.30.420.40:FF:000018">
    <property type="entry name" value="Actin-like protein (Centractin)"/>
    <property type="match status" value="1"/>
</dbReference>
<dbReference type="Gene3D" id="3.30.420.40">
    <property type="match status" value="2"/>
</dbReference>
<dbReference type="Gene3D" id="3.90.640.10">
    <property type="entry name" value="Actin, Chain A, domain 4"/>
    <property type="match status" value="1"/>
</dbReference>
<dbReference type="InterPro" id="IPR004000">
    <property type="entry name" value="Actin"/>
</dbReference>
<dbReference type="InterPro" id="IPR043129">
    <property type="entry name" value="ATPase_NBD"/>
</dbReference>
<dbReference type="PANTHER" id="PTHR11937">
    <property type="entry name" value="ACTIN"/>
    <property type="match status" value="1"/>
</dbReference>
<dbReference type="Pfam" id="PF00022">
    <property type="entry name" value="Actin"/>
    <property type="match status" value="1"/>
</dbReference>
<dbReference type="PRINTS" id="PR00190">
    <property type="entry name" value="ACTIN"/>
</dbReference>
<dbReference type="SMART" id="SM00268">
    <property type="entry name" value="ACTIN"/>
    <property type="match status" value="1"/>
</dbReference>
<dbReference type="SUPFAM" id="SSF53067">
    <property type="entry name" value="Actin-like ATPase domain"/>
    <property type="match status" value="2"/>
</dbReference>
<name>ACTT1_HUMAN</name>
<organism>
    <name type="scientific">Homo sapiens</name>
    <name type="common">Human</name>
    <dbReference type="NCBI Taxonomy" id="9606"/>
    <lineage>
        <taxon>Eukaryota</taxon>
        <taxon>Metazoa</taxon>
        <taxon>Chordata</taxon>
        <taxon>Craniata</taxon>
        <taxon>Vertebrata</taxon>
        <taxon>Euteleostomi</taxon>
        <taxon>Mammalia</taxon>
        <taxon>Eutheria</taxon>
        <taxon>Euarchontoglires</taxon>
        <taxon>Primates</taxon>
        <taxon>Haplorrhini</taxon>
        <taxon>Catarrhini</taxon>
        <taxon>Hominidae</taxon>
        <taxon>Homo</taxon>
    </lineage>
</organism>
<evidence type="ECO:0000269" key="1">
    <source>
    </source>
</evidence>
<evidence type="ECO:0000269" key="2">
    <source>
    </source>
</evidence>
<evidence type="ECO:0000303" key="3">
    <source>
    </source>
</evidence>
<evidence type="ECO:0000303" key="4">
    <source>
    </source>
</evidence>
<evidence type="ECO:0000305" key="5"/>
<evidence type="ECO:0000305" key="6">
    <source>
    </source>
</evidence>
<evidence type="ECO:0000312" key="7">
    <source>
        <dbReference type="HGNC" id="HGNC:24027"/>
    </source>
</evidence>